<keyword id="KW-0067">ATP-binding</keyword>
<keyword id="KW-0175">Coiled coil</keyword>
<keyword id="KW-0963">Cytoplasm</keyword>
<keyword id="KW-0206">Cytoskeleton</keyword>
<keyword id="KW-0967">Endosome</keyword>
<keyword id="KW-0446">Lipid-binding</keyword>
<keyword id="KW-0472">Membrane</keyword>
<keyword id="KW-0493">Microtubule</keyword>
<keyword id="KW-0505">Motor protein</keyword>
<keyword id="KW-0547">Nucleotide-binding</keyword>
<keyword id="KW-0597">Phosphoprotein</keyword>
<keyword id="KW-1185">Reference proteome</keyword>
<keyword id="KW-0813">Transport</keyword>
<organism>
    <name type="scientific">Mus musculus</name>
    <name type="common">Mouse</name>
    <dbReference type="NCBI Taxonomy" id="10090"/>
    <lineage>
        <taxon>Eukaryota</taxon>
        <taxon>Metazoa</taxon>
        <taxon>Chordata</taxon>
        <taxon>Craniata</taxon>
        <taxon>Vertebrata</taxon>
        <taxon>Euteleostomi</taxon>
        <taxon>Mammalia</taxon>
        <taxon>Eutheria</taxon>
        <taxon>Euarchontoglires</taxon>
        <taxon>Glires</taxon>
        <taxon>Rodentia</taxon>
        <taxon>Myomorpha</taxon>
        <taxon>Muroidea</taxon>
        <taxon>Muridae</taxon>
        <taxon>Murinae</taxon>
        <taxon>Mus</taxon>
        <taxon>Mus</taxon>
    </lineage>
</organism>
<protein>
    <recommendedName>
        <fullName>Kinesin-like protein KIF16B</fullName>
    </recommendedName>
</protein>
<gene>
    <name type="primary">Kif16b</name>
    <name type="synonym">Kiaa1590</name>
</gene>
<reference key="1">
    <citation type="journal article" date="2009" name="PLoS Biol.">
        <title>Lineage-specific biology revealed by a finished genome assembly of the mouse.</title>
        <authorList>
            <person name="Church D.M."/>
            <person name="Goodstadt L."/>
            <person name="Hillier L.W."/>
            <person name="Zody M.C."/>
            <person name="Goldstein S."/>
            <person name="She X."/>
            <person name="Bult C.J."/>
            <person name="Agarwala R."/>
            <person name="Cherry J.L."/>
            <person name="DiCuccio M."/>
            <person name="Hlavina W."/>
            <person name="Kapustin Y."/>
            <person name="Meric P."/>
            <person name="Maglott D."/>
            <person name="Birtle Z."/>
            <person name="Marques A.C."/>
            <person name="Graves T."/>
            <person name="Zhou S."/>
            <person name="Teague B."/>
            <person name="Potamousis K."/>
            <person name="Churas C."/>
            <person name="Place M."/>
            <person name="Herschleb J."/>
            <person name="Runnheim R."/>
            <person name="Forrest D."/>
            <person name="Amos-Landgraf J."/>
            <person name="Schwartz D.C."/>
            <person name="Cheng Z."/>
            <person name="Lindblad-Toh K."/>
            <person name="Eichler E.E."/>
            <person name="Ponting C.P."/>
        </authorList>
    </citation>
    <scope>NUCLEOTIDE SEQUENCE [LARGE SCALE GENOMIC DNA]</scope>
    <source>
        <strain>C57BL/6J</strain>
    </source>
</reference>
<reference key="2">
    <citation type="journal article" date="1997" name="Proc. Natl. Acad. Sci. U.S.A.">
        <title>Identification and classification of 16 new kinesin superfamily (KIF) proteins in mouse genome.</title>
        <authorList>
            <person name="Nakagawa T."/>
            <person name="Tanaka Y."/>
            <person name="Matsuoka E."/>
            <person name="Kondo S."/>
            <person name="Okada Y."/>
            <person name="Noda Y."/>
            <person name="Kanai Y."/>
            <person name="Hirokawa N."/>
        </authorList>
    </citation>
    <scope>NUCLEOTIDE SEQUENCE [MRNA] OF 101-239</scope>
    <source>
        <strain>ICR</strain>
    </source>
</reference>
<reference key="3">
    <citation type="journal article" date="2005" name="Science">
        <title>The transcriptional landscape of the mammalian genome.</title>
        <authorList>
            <person name="Carninci P."/>
            <person name="Kasukawa T."/>
            <person name="Katayama S."/>
            <person name="Gough J."/>
            <person name="Frith M.C."/>
            <person name="Maeda N."/>
            <person name="Oyama R."/>
            <person name="Ravasi T."/>
            <person name="Lenhard B."/>
            <person name="Wells C."/>
            <person name="Kodzius R."/>
            <person name="Shimokawa K."/>
            <person name="Bajic V.B."/>
            <person name="Brenner S.E."/>
            <person name="Batalov S."/>
            <person name="Forrest A.R."/>
            <person name="Zavolan M."/>
            <person name="Davis M.J."/>
            <person name="Wilming L.G."/>
            <person name="Aidinis V."/>
            <person name="Allen J.E."/>
            <person name="Ambesi-Impiombato A."/>
            <person name="Apweiler R."/>
            <person name="Aturaliya R.N."/>
            <person name="Bailey T.L."/>
            <person name="Bansal M."/>
            <person name="Baxter L."/>
            <person name="Beisel K.W."/>
            <person name="Bersano T."/>
            <person name="Bono H."/>
            <person name="Chalk A.M."/>
            <person name="Chiu K.P."/>
            <person name="Choudhary V."/>
            <person name="Christoffels A."/>
            <person name="Clutterbuck D.R."/>
            <person name="Crowe M.L."/>
            <person name="Dalla E."/>
            <person name="Dalrymple B.P."/>
            <person name="de Bono B."/>
            <person name="Della Gatta G."/>
            <person name="di Bernardo D."/>
            <person name="Down T."/>
            <person name="Engstrom P."/>
            <person name="Fagiolini M."/>
            <person name="Faulkner G."/>
            <person name="Fletcher C.F."/>
            <person name="Fukushima T."/>
            <person name="Furuno M."/>
            <person name="Futaki S."/>
            <person name="Gariboldi M."/>
            <person name="Georgii-Hemming P."/>
            <person name="Gingeras T.R."/>
            <person name="Gojobori T."/>
            <person name="Green R.E."/>
            <person name="Gustincich S."/>
            <person name="Harbers M."/>
            <person name="Hayashi Y."/>
            <person name="Hensch T.K."/>
            <person name="Hirokawa N."/>
            <person name="Hill D."/>
            <person name="Huminiecki L."/>
            <person name="Iacono M."/>
            <person name="Ikeo K."/>
            <person name="Iwama A."/>
            <person name="Ishikawa T."/>
            <person name="Jakt M."/>
            <person name="Kanapin A."/>
            <person name="Katoh M."/>
            <person name="Kawasawa Y."/>
            <person name="Kelso J."/>
            <person name="Kitamura H."/>
            <person name="Kitano H."/>
            <person name="Kollias G."/>
            <person name="Krishnan S.P."/>
            <person name="Kruger A."/>
            <person name="Kummerfeld S.K."/>
            <person name="Kurochkin I.V."/>
            <person name="Lareau L.F."/>
            <person name="Lazarevic D."/>
            <person name="Lipovich L."/>
            <person name="Liu J."/>
            <person name="Liuni S."/>
            <person name="McWilliam S."/>
            <person name="Madan Babu M."/>
            <person name="Madera M."/>
            <person name="Marchionni L."/>
            <person name="Matsuda H."/>
            <person name="Matsuzawa S."/>
            <person name="Miki H."/>
            <person name="Mignone F."/>
            <person name="Miyake S."/>
            <person name="Morris K."/>
            <person name="Mottagui-Tabar S."/>
            <person name="Mulder N."/>
            <person name="Nakano N."/>
            <person name="Nakauchi H."/>
            <person name="Ng P."/>
            <person name="Nilsson R."/>
            <person name="Nishiguchi S."/>
            <person name="Nishikawa S."/>
            <person name="Nori F."/>
            <person name="Ohara O."/>
            <person name="Okazaki Y."/>
            <person name="Orlando V."/>
            <person name="Pang K.C."/>
            <person name="Pavan W.J."/>
            <person name="Pavesi G."/>
            <person name="Pesole G."/>
            <person name="Petrovsky N."/>
            <person name="Piazza S."/>
            <person name="Reed J."/>
            <person name="Reid J.F."/>
            <person name="Ring B.Z."/>
            <person name="Ringwald M."/>
            <person name="Rost B."/>
            <person name="Ruan Y."/>
            <person name="Salzberg S.L."/>
            <person name="Sandelin A."/>
            <person name="Schneider C."/>
            <person name="Schoenbach C."/>
            <person name="Sekiguchi K."/>
            <person name="Semple C.A."/>
            <person name="Seno S."/>
            <person name="Sessa L."/>
            <person name="Sheng Y."/>
            <person name="Shibata Y."/>
            <person name="Shimada H."/>
            <person name="Shimada K."/>
            <person name="Silva D."/>
            <person name="Sinclair B."/>
            <person name="Sperling S."/>
            <person name="Stupka E."/>
            <person name="Sugiura K."/>
            <person name="Sultana R."/>
            <person name="Takenaka Y."/>
            <person name="Taki K."/>
            <person name="Tammoja K."/>
            <person name="Tan S.L."/>
            <person name="Tang S."/>
            <person name="Taylor M.S."/>
            <person name="Tegner J."/>
            <person name="Teichmann S.A."/>
            <person name="Ueda H.R."/>
            <person name="van Nimwegen E."/>
            <person name="Verardo R."/>
            <person name="Wei C.L."/>
            <person name="Yagi K."/>
            <person name="Yamanishi H."/>
            <person name="Zabarovsky E."/>
            <person name="Zhu S."/>
            <person name="Zimmer A."/>
            <person name="Hide W."/>
            <person name="Bult C."/>
            <person name="Grimmond S.M."/>
            <person name="Teasdale R.D."/>
            <person name="Liu E.T."/>
            <person name="Brusic V."/>
            <person name="Quackenbush J."/>
            <person name="Wahlestedt C."/>
            <person name="Mattick J.S."/>
            <person name="Hume D.A."/>
            <person name="Kai C."/>
            <person name="Sasaki D."/>
            <person name="Tomaru Y."/>
            <person name="Fukuda S."/>
            <person name="Kanamori-Katayama M."/>
            <person name="Suzuki M."/>
            <person name="Aoki J."/>
            <person name="Arakawa T."/>
            <person name="Iida J."/>
            <person name="Imamura K."/>
            <person name="Itoh M."/>
            <person name="Kato T."/>
            <person name="Kawaji H."/>
            <person name="Kawagashira N."/>
            <person name="Kawashima T."/>
            <person name="Kojima M."/>
            <person name="Kondo S."/>
            <person name="Konno H."/>
            <person name="Nakano K."/>
            <person name="Ninomiya N."/>
            <person name="Nishio T."/>
            <person name="Okada M."/>
            <person name="Plessy C."/>
            <person name="Shibata K."/>
            <person name="Shiraki T."/>
            <person name="Suzuki S."/>
            <person name="Tagami M."/>
            <person name="Waki K."/>
            <person name="Watahiki A."/>
            <person name="Okamura-Oho Y."/>
            <person name="Suzuki H."/>
            <person name="Kawai J."/>
            <person name="Hayashizaki Y."/>
        </authorList>
    </citation>
    <scope>NUCLEOTIDE SEQUENCE [LARGE SCALE MRNA] OF 195-1312</scope>
    <source>
        <strain>C57BL/6J</strain>
        <tissue>Gonad</tissue>
    </source>
</reference>
<reference key="4">
    <citation type="journal article" date="2003" name="DNA Res.">
        <title>Prediction of the coding sequences of mouse homologues of KIAA gene: III. The complete nucleotide sequences of 500 mouse KIAA-homologous cDNAs identified by screening of terminal sequences of cDNA clones randomly sampled from size-fractionated libraries.</title>
        <authorList>
            <person name="Okazaki N."/>
            <person name="Kikuno R."/>
            <person name="Ohara R."/>
            <person name="Inamoto S."/>
            <person name="Koseki H."/>
            <person name="Hiraoka S."/>
            <person name="Saga Y."/>
            <person name="Nagase T."/>
            <person name="Ohara O."/>
            <person name="Koga H."/>
        </authorList>
    </citation>
    <scope>NUCLEOTIDE SEQUENCE [LARGE SCALE MRNA] OF 487-1161</scope>
    <source>
        <tissue>Embryonic tail</tissue>
    </source>
</reference>
<reference key="5">
    <citation type="journal article" date="2009" name="Immunity">
        <title>The phagosomal proteome in interferon-gamma-activated macrophages.</title>
        <authorList>
            <person name="Trost M."/>
            <person name="English L."/>
            <person name="Lemieux S."/>
            <person name="Courcelles M."/>
            <person name="Desjardins M."/>
            <person name="Thibault P."/>
        </authorList>
    </citation>
    <scope>PHOSPHORYLATION [LARGE SCALE ANALYSIS] AT SER-1145</scope>
    <scope>IDENTIFICATION BY MASS SPECTROMETRY [LARGE SCALE ANALYSIS]</scope>
</reference>
<reference key="6">
    <citation type="journal article" date="2010" name="Cell">
        <title>A tissue-specific atlas of mouse protein phosphorylation and expression.</title>
        <authorList>
            <person name="Huttlin E.L."/>
            <person name="Jedrychowski M.P."/>
            <person name="Elias J.E."/>
            <person name="Goswami T."/>
            <person name="Rad R."/>
            <person name="Beausoleil S.A."/>
            <person name="Villen J."/>
            <person name="Haas W."/>
            <person name="Sowa M.E."/>
            <person name="Gygi S.P."/>
        </authorList>
    </citation>
    <scope>PHOSPHORYLATION [LARGE SCALE ANALYSIS] AT SER-582 AND SER-838</scope>
    <scope>IDENTIFICATION BY MASS SPECTROMETRY [LARGE SCALE ANALYSIS]</scope>
    <source>
        <tissue>Brain</tissue>
        <tissue>Kidney</tissue>
        <tissue>Spleen</tissue>
    </source>
</reference>
<reference key="7">
    <citation type="journal article" date="2011" name="Dev. Cell">
        <title>KIF16B/Rab14 molecular motor complex is critical for early embryonic development by transporting FGF receptor.</title>
        <authorList>
            <person name="Ueno H."/>
            <person name="Huang X."/>
            <person name="Tanaka Y."/>
            <person name="Hirokawa N."/>
        </authorList>
    </citation>
    <scope>FUNCTION</scope>
    <scope>DISRUPTION PHENOTYPE</scope>
    <scope>INTERACTION WITH RAB14</scope>
</reference>
<feature type="chain" id="PRO_0000409500" description="Kinesin-like protein KIF16B">
    <location>
        <begin position="1"/>
        <end position="1312"/>
    </location>
</feature>
<feature type="domain" description="Kinesin motor" evidence="5">
    <location>
        <begin position="3"/>
        <end position="358"/>
    </location>
</feature>
<feature type="domain" description="FHA">
    <location>
        <begin position="480" status="uncertain"/>
        <end position="544" status="uncertain"/>
    </location>
</feature>
<feature type="domain" description="PX" evidence="4">
    <location>
        <begin position="1177"/>
        <end position="1291"/>
    </location>
</feature>
<feature type="coiled-coil region" evidence="3">
    <location>
        <begin position="366"/>
        <end position="425"/>
    </location>
</feature>
<feature type="coiled-coil region" evidence="3">
    <location>
        <begin position="835"/>
        <end position="913"/>
    </location>
</feature>
<feature type="coiled-coil region" evidence="3">
    <location>
        <begin position="941"/>
        <end position="1073"/>
    </location>
</feature>
<feature type="binding site" evidence="5">
    <location>
        <begin position="102"/>
        <end position="109"/>
    </location>
    <ligand>
        <name>ATP</name>
        <dbReference type="ChEBI" id="CHEBI:30616"/>
    </ligand>
</feature>
<feature type="modified residue" description="Phosphoserine" evidence="2">
    <location>
        <position position="398"/>
    </location>
</feature>
<feature type="modified residue" description="Phosphothreonine" evidence="2">
    <location>
        <position position="577"/>
    </location>
</feature>
<feature type="modified residue" description="Phosphoserine" evidence="9">
    <location>
        <position position="582"/>
    </location>
</feature>
<feature type="modified residue" description="Phosphoserine" evidence="9">
    <location>
        <position position="838"/>
    </location>
</feature>
<feature type="modified residue" description="Phosphoserine" evidence="2">
    <location>
        <position position="1047"/>
    </location>
</feature>
<feature type="modified residue" description="Phosphoserine" evidence="8">
    <location>
        <position position="1145"/>
    </location>
</feature>
<dbReference type="EMBL" id="AL731712">
    <property type="status" value="NOT_ANNOTATED_CDS"/>
    <property type="molecule type" value="Genomic_DNA"/>
</dbReference>
<dbReference type="EMBL" id="AL731790">
    <property type="status" value="NOT_ANNOTATED_CDS"/>
    <property type="molecule type" value="Genomic_DNA"/>
</dbReference>
<dbReference type="EMBL" id="AL929136">
    <property type="status" value="NOT_ANNOTATED_CDS"/>
    <property type="molecule type" value="Genomic_DNA"/>
</dbReference>
<dbReference type="EMBL" id="AB001423">
    <property type="protein sequence ID" value="BAA22383.1"/>
    <property type="molecule type" value="mRNA"/>
</dbReference>
<dbReference type="EMBL" id="AK033018">
    <property type="protein sequence ID" value="BAC28130.2"/>
    <property type="molecule type" value="mRNA"/>
</dbReference>
<dbReference type="EMBL" id="AK160835">
    <property type="protein sequence ID" value="BAE36039.1"/>
    <property type="molecule type" value="mRNA"/>
</dbReference>
<dbReference type="EMBL" id="AK129401">
    <property type="protein sequence ID" value="BAC98211.1"/>
    <property type="status" value="ALT_SEQ"/>
    <property type="molecule type" value="Transcribed_RNA"/>
</dbReference>
<dbReference type="CCDS" id="CCDS38251.1"/>
<dbReference type="RefSeq" id="NP_001074602.1">
    <property type="nucleotide sequence ID" value="NM_001081133.3"/>
</dbReference>
<dbReference type="SMR" id="B1AVY7"/>
<dbReference type="BioGRID" id="200933">
    <property type="interactions" value="4"/>
</dbReference>
<dbReference type="FunCoup" id="B1AVY7">
    <property type="interactions" value="2229"/>
</dbReference>
<dbReference type="STRING" id="10090.ENSMUSP00000042551"/>
<dbReference type="iPTMnet" id="B1AVY7"/>
<dbReference type="PhosphoSitePlus" id="B1AVY7"/>
<dbReference type="jPOST" id="B1AVY7"/>
<dbReference type="PaxDb" id="10090-ENSMUSP00000042551"/>
<dbReference type="PeptideAtlas" id="B1AVY7"/>
<dbReference type="ProteomicsDB" id="263599"/>
<dbReference type="Pumba" id="B1AVY7"/>
<dbReference type="Antibodypedia" id="24366">
    <property type="antibodies" value="102 antibodies from 15 providers"/>
</dbReference>
<dbReference type="Ensembl" id="ENSMUST00000043589.8">
    <property type="protein sequence ID" value="ENSMUSP00000042551.8"/>
    <property type="gene ID" value="ENSMUSG00000038844.11"/>
</dbReference>
<dbReference type="GeneID" id="16558"/>
<dbReference type="KEGG" id="mmu:16558"/>
<dbReference type="UCSC" id="uc008mpz.1">
    <property type="organism name" value="mouse"/>
</dbReference>
<dbReference type="AGR" id="MGI:1098240"/>
<dbReference type="CTD" id="55614"/>
<dbReference type="MGI" id="MGI:1098240">
    <property type="gene designation" value="Kif16b"/>
</dbReference>
<dbReference type="VEuPathDB" id="HostDB:ENSMUSG00000038844"/>
<dbReference type="eggNOG" id="KOG0245">
    <property type="taxonomic scope" value="Eukaryota"/>
</dbReference>
<dbReference type="eggNOG" id="KOG2101">
    <property type="taxonomic scope" value="Eukaryota"/>
</dbReference>
<dbReference type="GeneTree" id="ENSGT00940000162977"/>
<dbReference type="HOGENOM" id="CLU_001485_35_0_1"/>
<dbReference type="InParanoid" id="B1AVY7"/>
<dbReference type="OMA" id="HWHGAQQ"/>
<dbReference type="PhylomeDB" id="B1AVY7"/>
<dbReference type="TreeFam" id="TF105221"/>
<dbReference type="Reactome" id="R-MMU-2132295">
    <property type="pathway name" value="MHC class II antigen presentation"/>
</dbReference>
<dbReference type="Reactome" id="R-MMU-6811434">
    <property type="pathway name" value="COPI-dependent Golgi-to-ER retrograde traffic"/>
</dbReference>
<dbReference type="Reactome" id="R-MMU-983189">
    <property type="pathway name" value="Kinesins"/>
</dbReference>
<dbReference type="BioGRID-ORCS" id="16558">
    <property type="hits" value="6 hits in 78 CRISPR screens"/>
</dbReference>
<dbReference type="ChiTaRS" id="Kif16b">
    <property type="organism name" value="mouse"/>
</dbReference>
<dbReference type="PRO" id="PR:B1AVY7"/>
<dbReference type="Proteomes" id="UP000000589">
    <property type="component" value="Chromosome 2"/>
</dbReference>
<dbReference type="RNAct" id="B1AVY7">
    <property type="molecule type" value="protein"/>
</dbReference>
<dbReference type="Bgee" id="ENSMUSG00000038844">
    <property type="expression patterns" value="Expressed in submandibular gland and 258 other cell types or tissues"/>
</dbReference>
<dbReference type="ExpressionAtlas" id="B1AVY7">
    <property type="expression patterns" value="baseline and differential"/>
</dbReference>
<dbReference type="GO" id="GO:0005829">
    <property type="term" value="C:cytosol"/>
    <property type="evidence" value="ECO:0007669"/>
    <property type="project" value="GOC"/>
</dbReference>
<dbReference type="GO" id="GO:0005769">
    <property type="term" value="C:early endosome"/>
    <property type="evidence" value="ECO:0000250"/>
    <property type="project" value="UniProtKB"/>
</dbReference>
<dbReference type="GO" id="GO:0031901">
    <property type="term" value="C:early endosome membrane"/>
    <property type="evidence" value="ECO:0007669"/>
    <property type="project" value="UniProtKB-SubCell"/>
</dbReference>
<dbReference type="GO" id="GO:0005768">
    <property type="term" value="C:endosome"/>
    <property type="evidence" value="ECO:0000250"/>
    <property type="project" value="UniProtKB"/>
</dbReference>
<dbReference type="GO" id="GO:0005874">
    <property type="term" value="C:microtubule"/>
    <property type="evidence" value="ECO:0007669"/>
    <property type="project" value="UniProtKB-KW"/>
</dbReference>
<dbReference type="GO" id="GO:0045335">
    <property type="term" value="C:phagocytic vesicle"/>
    <property type="evidence" value="ECO:0000314"/>
    <property type="project" value="MGI"/>
</dbReference>
<dbReference type="GO" id="GO:0005819">
    <property type="term" value="C:spindle"/>
    <property type="evidence" value="ECO:0007669"/>
    <property type="project" value="UniProtKB-SubCell"/>
</dbReference>
<dbReference type="GO" id="GO:0005524">
    <property type="term" value="F:ATP binding"/>
    <property type="evidence" value="ECO:0007669"/>
    <property type="project" value="UniProtKB-KW"/>
</dbReference>
<dbReference type="GO" id="GO:0008017">
    <property type="term" value="F:microtubule binding"/>
    <property type="evidence" value="ECO:0007669"/>
    <property type="project" value="InterPro"/>
</dbReference>
<dbReference type="GO" id="GO:0005547">
    <property type="term" value="F:phosphatidylinositol-3,4,5-trisphosphate binding"/>
    <property type="evidence" value="ECO:0000250"/>
    <property type="project" value="UniProtKB"/>
</dbReference>
<dbReference type="GO" id="GO:0043325">
    <property type="term" value="F:phosphatidylinositol-3,4-bisphosphate binding"/>
    <property type="evidence" value="ECO:0000250"/>
    <property type="project" value="UniProtKB"/>
</dbReference>
<dbReference type="GO" id="GO:0080025">
    <property type="term" value="F:phosphatidylinositol-3,5-bisphosphate binding"/>
    <property type="evidence" value="ECO:0000250"/>
    <property type="project" value="UniProtKB"/>
</dbReference>
<dbReference type="GO" id="GO:0032266">
    <property type="term" value="F:phosphatidylinositol-3-phosphate binding"/>
    <property type="evidence" value="ECO:0000250"/>
    <property type="project" value="UniProtKB"/>
</dbReference>
<dbReference type="GO" id="GO:0008574">
    <property type="term" value="F:plus-end-directed microtubule motor activity"/>
    <property type="evidence" value="ECO:0000250"/>
    <property type="project" value="UniProtKB"/>
</dbReference>
<dbReference type="GO" id="GO:0031267">
    <property type="term" value="F:small GTPase binding"/>
    <property type="evidence" value="ECO:0000353"/>
    <property type="project" value="UniProtKB"/>
</dbReference>
<dbReference type="GO" id="GO:0071346">
    <property type="term" value="P:cellular response to type II interferon"/>
    <property type="evidence" value="ECO:0000314"/>
    <property type="project" value="MGI"/>
</dbReference>
<dbReference type="GO" id="GO:0045022">
    <property type="term" value="P:early endosome to late endosome transport"/>
    <property type="evidence" value="ECO:0000250"/>
    <property type="project" value="UniProtKB"/>
</dbReference>
<dbReference type="GO" id="GO:0007492">
    <property type="term" value="P:endoderm development"/>
    <property type="evidence" value="ECO:0000315"/>
    <property type="project" value="UniProtKB"/>
</dbReference>
<dbReference type="GO" id="GO:0007173">
    <property type="term" value="P:epidermal growth factor receptor signaling pathway"/>
    <property type="evidence" value="ECO:0000250"/>
    <property type="project" value="UniProtKB"/>
</dbReference>
<dbReference type="GO" id="GO:0008543">
    <property type="term" value="P:fibroblast growth factor receptor signaling pathway"/>
    <property type="evidence" value="ECO:0000315"/>
    <property type="project" value="UniProtKB"/>
</dbReference>
<dbReference type="GO" id="GO:0001704">
    <property type="term" value="P:formation of primary germ layer"/>
    <property type="evidence" value="ECO:0000315"/>
    <property type="project" value="UniProtKB"/>
</dbReference>
<dbReference type="GO" id="GO:0006895">
    <property type="term" value="P:Golgi to endosome transport"/>
    <property type="evidence" value="ECO:0000315"/>
    <property type="project" value="UniProtKB"/>
</dbReference>
<dbReference type="GO" id="GO:0007018">
    <property type="term" value="P:microtubule-based movement"/>
    <property type="evidence" value="ECO:0007669"/>
    <property type="project" value="InterPro"/>
</dbReference>
<dbReference type="GO" id="GO:0032801">
    <property type="term" value="P:receptor catabolic process"/>
    <property type="evidence" value="ECO:0000250"/>
    <property type="project" value="UniProtKB"/>
</dbReference>
<dbReference type="GO" id="GO:0001919">
    <property type="term" value="P:regulation of receptor recycling"/>
    <property type="evidence" value="ECO:0000250"/>
    <property type="project" value="UniProtKB"/>
</dbReference>
<dbReference type="CDD" id="cd01365">
    <property type="entry name" value="KISc_KIF1A_KIF1B"/>
    <property type="match status" value="1"/>
</dbReference>
<dbReference type="CDD" id="cd06874">
    <property type="entry name" value="PX_KIF16B_SNX23"/>
    <property type="match status" value="1"/>
</dbReference>
<dbReference type="FunFam" id="2.60.200.20:FF:000005">
    <property type="entry name" value="Kinesin family member 16B"/>
    <property type="match status" value="1"/>
</dbReference>
<dbReference type="FunFam" id="3.30.1520.10:FF:000022">
    <property type="entry name" value="Kinesin family member 16B"/>
    <property type="match status" value="1"/>
</dbReference>
<dbReference type="FunFam" id="3.40.850.10:FF:000021">
    <property type="entry name" value="kinesin-like protein KIF16B isoform X1"/>
    <property type="match status" value="1"/>
</dbReference>
<dbReference type="Gene3D" id="2.60.200.20">
    <property type="match status" value="1"/>
</dbReference>
<dbReference type="Gene3D" id="3.40.850.10">
    <property type="entry name" value="Kinesin motor domain"/>
    <property type="match status" value="1"/>
</dbReference>
<dbReference type="Gene3D" id="3.30.1520.10">
    <property type="entry name" value="Phox-like domain"/>
    <property type="match status" value="1"/>
</dbReference>
<dbReference type="InterPro" id="IPR000253">
    <property type="entry name" value="FHA_dom"/>
</dbReference>
<dbReference type="InterPro" id="IPR019821">
    <property type="entry name" value="Kinesin_motor_CS"/>
</dbReference>
<dbReference type="InterPro" id="IPR001752">
    <property type="entry name" value="Kinesin_motor_dom"/>
</dbReference>
<dbReference type="InterPro" id="IPR036961">
    <property type="entry name" value="Kinesin_motor_dom_sf"/>
</dbReference>
<dbReference type="InterPro" id="IPR027417">
    <property type="entry name" value="P-loop_NTPase"/>
</dbReference>
<dbReference type="InterPro" id="IPR001683">
    <property type="entry name" value="PX_dom"/>
</dbReference>
<dbReference type="InterPro" id="IPR036871">
    <property type="entry name" value="PX_dom_sf"/>
</dbReference>
<dbReference type="InterPro" id="IPR008984">
    <property type="entry name" value="SMAD_FHA_dom_sf"/>
</dbReference>
<dbReference type="PANTHER" id="PTHR47117:SF8">
    <property type="entry name" value="KINESIN FAMILY MEMBER 16B"/>
    <property type="match status" value="1"/>
</dbReference>
<dbReference type="PANTHER" id="PTHR47117">
    <property type="entry name" value="STAR-RELATED LIPID TRANSFER PROTEIN 9"/>
    <property type="match status" value="1"/>
</dbReference>
<dbReference type="Pfam" id="PF00498">
    <property type="entry name" value="FHA"/>
    <property type="match status" value="1"/>
</dbReference>
<dbReference type="Pfam" id="PF00225">
    <property type="entry name" value="Kinesin"/>
    <property type="match status" value="1"/>
</dbReference>
<dbReference type="Pfam" id="PF00787">
    <property type="entry name" value="PX"/>
    <property type="match status" value="1"/>
</dbReference>
<dbReference type="PRINTS" id="PR00380">
    <property type="entry name" value="KINESINHEAVY"/>
</dbReference>
<dbReference type="SMART" id="SM00129">
    <property type="entry name" value="KISc"/>
    <property type="match status" value="1"/>
</dbReference>
<dbReference type="SMART" id="SM00312">
    <property type="entry name" value="PX"/>
    <property type="match status" value="1"/>
</dbReference>
<dbReference type="SUPFAM" id="SSF52540">
    <property type="entry name" value="P-loop containing nucleoside triphosphate hydrolases"/>
    <property type="match status" value="1"/>
</dbReference>
<dbReference type="SUPFAM" id="SSF64268">
    <property type="entry name" value="PX domain"/>
    <property type="match status" value="1"/>
</dbReference>
<dbReference type="SUPFAM" id="SSF49879">
    <property type="entry name" value="SMAD/FHA domain"/>
    <property type="match status" value="1"/>
</dbReference>
<dbReference type="PROSITE" id="PS00411">
    <property type="entry name" value="KINESIN_MOTOR_1"/>
    <property type="match status" value="1"/>
</dbReference>
<dbReference type="PROSITE" id="PS50067">
    <property type="entry name" value="KINESIN_MOTOR_2"/>
    <property type="match status" value="1"/>
</dbReference>
<dbReference type="PROSITE" id="PS50195">
    <property type="entry name" value="PX"/>
    <property type="match status" value="1"/>
</dbReference>
<name>KI16B_MOUSE</name>
<comment type="function">
    <text evidence="6">Plus end-directed microtubule-dependent motor protein involved in endosome transport and receptor recycling and degradation. Regulates the plus end motility of early endosomes and the balance between recycling and degradation of receptors such as EGF receptor (EGFR) and FGF receptor (FGFR). Regulates the Golgi to endosome transport of FGFR-containing vesicles during early development, a key process for developing basement membrane and epiblast and primitive endoderm lineages during early postimplantation development.</text>
</comment>
<comment type="subunit">
    <text evidence="1 6">Interacts with PTPN21 (By similarity). Interacts with RAB14.</text>
</comment>
<comment type="subcellular location">
    <subcellularLocation>
        <location evidence="2">Cytoplasm</location>
        <location evidence="2">Cytoskeleton</location>
    </subcellularLocation>
    <subcellularLocation>
        <location evidence="2">Early endosome membrane</location>
    </subcellularLocation>
    <subcellularLocation>
        <location evidence="2">Cytoplasm</location>
    </subcellularLocation>
    <subcellularLocation>
        <location evidence="2">Cytoplasm</location>
        <location evidence="2">Cytoskeleton</location>
        <location evidence="2">Spindle</location>
    </subcellularLocation>
    <text evidence="2">It is unclear whether association with endosomes is mediated via phosphatidylinositol 3-phosphate (PtdIns(3)P)-binding or via its interaction with RAB14.</text>
</comment>
<comment type="domain">
    <text evidence="1">The PX domain mediates binding to phosphatidylinositol 3-phosphate (PtdIns(3)P), phosphatidylinositol 3,4-bisphosphate (PtdIns(3,4)P2), phosphatidylinositol 3,5-bisphosphate (PtdIns(3,5)P2) and phosphatidylinositol 3,4,5-trisphosphate (PtdIns(3,4,5)P3). Does not bind phosphatidylinositol 4,5-bisphosphate (PtdIns(4,5)P2) (By similarity).</text>
</comment>
<comment type="disruption phenotype">
    <text evidence="6">Embryonic death. Embryos are arrested at the blastocyst stage: the primitive endoderm and epiblast cannot be distinguished and appear as cell clumps resembling the inner cell mass (ICM) of the blastocyst. Embryos do not develop an epiblast epithelium and the uterine reaction appears to be incomplete. Development of the primitive endoderm and a basement membrane derived from it are severely affected in embryos at 4.5 dpc.</text>
</comment>
<comment type="similarity">
    <text evidence="5">Belongs to the TRAFAC class myosin-kinesin ATPase superfamily. Kinesin family.</text>
</comment>
<comment type="sequence caution" evidence="7">
    <conflict type="miscellaneous discrepancy">
        <sequence resource="EMBL-CDS" id="BAC98211"/>
    </conflict>
    <text>Partially unspliced pre-RNA.</text>
</comment>
<accession>B1AVY7</accession>
<accession>O35056</accession>
<accession>Q3TUD2</accession>
<accession>Q6ZPM0</accession>
<accession>Q8BZZ9</accession>
<proteinExistence type="evidence at protein level"/>
<sequence length="1312" mass="150058">MASVKVAVRVRPMNRREKDLEAKFIIQMEKSKTTITNLKIPEGGTGDSGRERTKTFTYDFSFYSADTKSPDYVSQEMVFKTLGTDVVKSAFEGYNACVFAYGQTGSGKSYTMMGNSGDSGLIPRICEALFSRINETTRWDEASFRTEVSYLEIYNERVRDLLRRKSSKTFNLRVREHPKEGPYVEDLSKHLVQNYSDVEELMDAGNINRTTAATGMNDVSSRSHAIFTIKFTQAKFDAEMPCETVSKIHLVDLAGSERADATGATGVRLKEGGNINKSLVTLGNVISALADLSQDAANPLVKKKQVFVPYRDSVLTWLLKDSLGGNSKTIMIATISPADVNYGETLSTLRYANRAKNIINKPTINEDANVKLIRELRAEIARLKTLLAQGNQIALLDSPTALSMEEKLHQNEARVQELTKEWTNKWNETQNILKEQTLALRKEGIGVVLDSELPHLIGIDDDLLSTGIILYHLKEGQTYVGREDASTEQDIVLHGLDLESEHCVFENAGGTVTLIPLRGSQCSVNGVQIVDATQLNQGAVILLGRTNMFRFNHPKEAAKLREKRKSGLLSSFSLSMTDLSKSCENLSAVMLYNPGLEFERQQREELEKLESKRKLIEEMEEKQKSDKAELERMQQEVETRRKETEIVQRQIRKQEESLKRRSFHIENKLKDLLAEKERFEEERLREQQGLEQQRRQEEESLFRIREELRKLQELNSHEQAEKVQIFQELDRLHQEQNAQSAKLRLEKRRLEEEEKEQVQRVAHLEEQLRKRQDTAPLLCPGEAQRAQEEKRELESIREALLQAKEMRAGGDHTCRDELERAQQYFLEFKRRQLVKLASLEKDLVQQKDLLSKEVQEEKVALEHVKCDAGGDPSFLATDDGNILGGPPDLDKIKTAETRLQSREHQLQDLLQNHLPALLEEKQRVLDALDSGVLGLDTTLCQVEKEVGEKEEQIAQYQANASQLQQLRATFEFTANVARQEEKVRRKEKEILESQEKQQREALEQAVAKLEQRRSALQRCSTLDLEIQEQRQKLGSLHTSEWSGWQASLETDGEALEMDPARLEHEIHQLKQKICEVDGVQRPHHGILEGQAVLSSLPPSGGNSHLAPLMDARISAYIEEEVQRRLHDLHRAIGDANHTPADVMKSNEELHNGTTQRKLKYERMYSRSLGTNRDDLKDPIKISIPRYVLCGQGKDEHFEFEVKISVLDETWTVFRRYSRFREMHKTLKLKYAELAALEFPPKKLFGNKDERVVAERRTHLEKYLREFFSVMLQSETSPLHINKVGLTLSKHTICEFSPFFKKGVFDYSSHGTG</sequence>
<evidence type="ECO:0000250" key="1"/>
<evidence type="ECO:0000250" key="2">
    <source>
        <dbReference type="UniProtKB" id="Q96L93"/>
    </source>
</evidence>
<evidence type="ECO:0000255" key="3"/>
<evidence type="ECO:0000255" key="4">
    <source>
        <dbReference type="PROSITE-ProRule" id="PRU00147"/>
    </source>
</evidence>
<evidence type="ECO:0000255" key="5">
    <source>
        <dbReference type="PROSITE-ProRule" id="PRU00283"/>
    </source>
</evidence>
<evidence type="ECO:0000269" key="6">
    <source>
    </source>
</evidence>
<evidence type="ECO:0000305" key="7"/>
<evidence type="ECO:0007744" key="8">
    <source>
    </source>
</evidence>
<evidence type="ECO:0007744" key="9">
    <source>
    </source>
</evidence>